<name>HIS5_MYCPA</name>
<reference key="1">
    <citation type="journal article" date="2005" name="Proc. Natl. Acad. Sci. U.S.A.">
        <title>The complete genome sequence of Mycobacterium avium subspecies paratuberculosis.</title>
        <authorList>
            <person name="Li L."/>
            <person name="Bannantine J.P."/>
            <person name="Zhang Q."/>
            <person name="Amonsin A."/>
            <person name="May B.J."/>
            <person name="Alt D."/>
            <person name="Banerji N."/>
            <person name="Kanjilal S."/>
            <person name="Kapur V."/>
        </authorList>
    </citation>
    <scope>NUCLEOTIDE SEQUENCE [LARGE SCALE GENOMIC DNA]</scope>
    <source>
        <strain>ATCC BAA-968 / K-10</strain>
    </source>
</reference>
<dbReference type="EC" id="4.3.2.10" evidence="1"/>
<dbReference type="EC" id="3.5.1.2" evidence="1"/>
<dbReference type="EMBL" id="AE016958">
    <property type="protein sequence ID" value="AAS03613.1"/>
    <property type="molecule type" value="Genomic_DNA"/>
</dbReference>
<dbReference type="RefSeq" id="WP_003876208.1">
    <property type="nucleotide sequence ID" value="NZ_CP106873.1"/>
</dbReference>
<dbReference type="SMR" id="P60600"/>
<dbReference type="STRING" id="262316.MAP_1296"/>
<dbReference type="KEGG" id="mpa:MAP_1296"/>
<dbReference type="eggNOG" id="COG0118">
    <property type="taxonomic scope" value="Bacteria"/>
</dbReference>
<dbReference type="HOGENOM" id="CLU_071837_1_0_11"/>
<dbReference type="UniPathway" id="UPA00031">
    <property type="reaction ID" value="UER00010"/>
</dbReference>
<dbReference type="Proteomes" id="UP000000580">
    <property type="component" value="Chromosome"/>
</dbReference>
<dbReference type="GO" id="GO:0005737">
    <property type="term" value="C:cytoplasm"/>
    <property type="evidence" value="ECO:0007669"/>
    <property type="project" value="UniProtKB-SubCell"/>
</dbReference>
<dbReference type="GO" id="GO:0004359">
    <property type="term" value="F:glutaminase activity"/>
    <property type="evidence" value="ECO:0007669"/>
    <property type="project" value="UniProtKB-EC"/>
</dbReference>
<dbReference type="GO" id="GO:0000107">
    <property type="term" value="F:imidazoleglycerol-phosphate synthase activity"/>
    <property type="evidence" value="ECO:0007669"/>
    <property type="project" value="UniProtKB-UniRule"/>
</dbReference>
<dbReference type="GO" id="GO:0016829">
    <property type="term" value="F:lyase activity"/>
    <property type="evidence" value="ECO:0007669"/>
    <property type="project" value="UniProtKB-KW"/>
</dbReference>
<dbReference type="GO" id="GO:0000105">
    <property type="term" value="P:L-histidine biosynthetic process"/>
    <property type="evidence" value="ECO:0007669"/>
    <property type="project" value="UniProtKB-UniRule"/>
</dbReference>
<dbReference type="CDD" id="cd01748">
    <property type="entry name" value="GATase1_IGP_Synthase"/>
    <property type="match status" value="1"/>
</dbReference>
<dbReference type="FunFam" id="3.40.50.880:FF:000056">
    <property type="entry name" value="Imidazole glycerol phosphate synthase subunit HisH"/>
    <property type="match status" value="1"/>
</dbReference>
<dbReference type="Gene3D" id="3.40.50.880">
    <property type="match status" value="1"/>
</dbReference>
<dbReference type="HAMAP" id="MF_00278">
    <property type="entry name" value="HisH"/>
    <property type="match status" value="1"/>
</dbReference>
<dbReference type="InterPro" id="IPR029062">
    <property type="entry name" value="Class_I_gatase-like"/>
</dbReference>
<dbReference type="InterPro" id="IPR017926">
    <property type="entry name" value="GATASE"/>
</dbReference>
<dbReference type="InterPro" id="IPR010139">
    <property type="entry name" value="Imidazole-glycPsynth_HisH"/>
</dbReference>
<dbReference type="NCBIfam" id="TIGR01855">
    <property type="entry name" value="IMP_synth_hisH"/>
    <property type="match status" value="1"/>
</dbReference>
<dbReference type="PANTHER" id="PTHR42701">
    <property type="entry name" value="IMIDAZOLE GLYCEROL PHOSPHATE SYNTHASE SUBUNIT HISH"/>
    <property type="match status" value="1"/>
</dbReference>
<dbReference type="PANTHER" id="PTHR42701:SF1">
    <property type="entry name" value="IMIDAZOLE GLYCEROL PHOSPHATE SYNTHASE SUBUNIT HISH"/>
    <property type="match status" value="1"/>
</dbReference>
<dbReference type="Pfam" id="PF00117">
    <property type="entry name" value="GATase"/>
    <property type="match status" value="1"/>
</dbReference>
<dbReference type="PIRSF" id="PIRSF000495">
    <property type="entry name" value="Amidotransf_hisH"/>
    <property type="match status" value="1"/>
</dbReference>
<dbReference type="SUPFAM" id="SSF52317">
    <property type="entry name" value="Class I glutamine amidotransferase-like"/>
    <property type="match status" value="1"/>
</dbReference>
<dbReference type="PROSITE" id="PS51273">
    <property type="entry name" value="GATASE_TYPE_1"/>
    <property type="match status" value="1"/>
</dbReference>
<gene>
    <name evidence="1" type="primary">hisH</name>
    <name type="ordered locus">MAP_1296</name>
</gene>
<sequence>MTSKSVVVLDYGSGNLRSAQRALERVGASVQVTADADAAAAADGLVVPGVGAYEACMTGLRKIGGDRIIAERVAAGRPVLGVCVGMQILFARGVEFSVETSGCGQWPGSVTRLQAPVIPHMGWNVVESGPDSVLFRGLDADTRFYFVHSYAAQQWEGSPEAVLTWSRHEGPFLAAVEDGPLSATQFHPEKSGDAGAAVLRNWIERL</sequence>
<feature type="chain" id="PRO_0000152395" description="Imidazole glycerol phosphate synthase subunit HisH">
    <location>
        <begin position="1"/>
        <end position="206"/>
    </location>
</feature>
<feature type="domain" description="Glutamine amidotransferase type-1" evidence="1">
    <location>
        <begin position="5"/>
        <end position="206"/>
    </location>
</feature>
<feature type="active site" description="Nucleophile" evidence="1">
    <location>
        <position position="83"/>
    </location>
</feature>
<feature type="active site" evidence="1">
    <location>
        <position position="187"/>
    </location>
</feature>
<feature type="active site" evidence="1">
    <location>
        <position position="189"/>
    </location>
</feature>
<proteinExistence type="inferred from homology"/>
<protein>
    <recommendedName>
        <fullName evidence="1">Imidazole glycerol phosphate synthase subunit HisH</fullName>
        <ecNumber evidence="1">4.3.2.10</ecNumber>
    </recommendedName>
    <alternativeName>
        <fullName evidence="1">IGP synthase glutaminase subunit</fullName>
        <ecNumber evidence="1">3.5.1.2</ecNumber>
    </alternativeName>
    <alternativeName>
        <fullName evidence="1">IGP synthase subunit HisH</fullName>
    </alternativeName>
    <alternativeName>
        <fullName evidence="1">ImGP synthase subunit HisH</fullName>
        <shortName evidence="1">IGPS subunit HisH</shortName>
    </alternativeName>
</protein>
<comment type="function">
    <text evidence="1">IGPS catalyzes the conversion of PRFAR and glutamine to IGP, AICAR and glutamate. The HisH subunit catalyzes the hydrolysis of glutamine to glutamate and ammonia as part of the synthesis of IGP and AICAR. The resulting ammonia molecule is channeled to the active site of HisF.</text>
</comment>
<comment type="catalytic activity">
    <reaction evidence="1">
        <text>5-[(5-phospho-1-deoxy-D-ribulos-1-ylimino)methylamino]-1-(5-phospho-beta-D-ribosyl)imidazole-4-carboxamide + L-glutamine = D-erythro-1-(imidazol-4-yl)glycerol 3-phosphate + 5-amino-1-(5-phospho-beta-D-ribosyl)imidazole-4-carboxamide + L-glutamate + H(+)</text>
        <dbReference type="Rhea" id="RHEA:24793"/>
        <dbReference type="ChEBI" id="CHEBI:15378"/>
        <dbReference type="ChEBI" id="CHEBI:29985"/>
        <dbReference type="ChEBI" id="CHEBI:58278"/>
        <dbReference type="ChEBI" id="CHEBI:58359"/>
        <dbReference type="ChEBI" id="CHEBI:58475"/>
        <dbReference type="ChEBI" id="CHEBI:58525"/>
        <dbReference type="EC" id="4.3.2.10"/>
    </reaction>
</comment>
<comment type="catalytic activity">
    <reaction evidence="1">
        <text>L-glutamine + H2O = L-glutamate + NH4(+)</text>
        <dbReference type="Rhea" id="RHEA:15889"/>
        <dbReference type="ChEBI" id="CHEBI:15377"/>
        <dbReference type="ChEBI" id="CHEBI:28938"/>
        <dbReference type="ChEBI" id="CHEBI:29985"/>
        <dbReference type="ChEBI" id="CHEBI:58359"/>
        <dbReference type="EC" id="3.5.1.2"/>
    </reaction>
</comment>
<comment type="pathway">
    <text evidence="1">Amino-acid biosynthesis; L-histidine biosynthesis; L-histidine from 5-phospho-alpha-D-ribose 1-diphosphate: step 5/9.</text>
</comment>
<comment type="subunit">
    <text evidence="1">Heterodimer of HisH and HisF.</text>
</comment>
<comment type="subcellular location">
    <subcellularLocation>
        <location evidence="1">Cytoplasm</location>
    </subcellularLocation>
</comment>
<accession>P60600</accession>
<evidence type="ECO:0000255" key="1">
    <source>
        <dbReference type="HAMAP-Rule" id="MF_00278"/>
    </source>
</evidence>
<organism>
    <name type="scientific">Mycolicibacterium paratuberculosis (strain ATCC BAA-968 / K-10)</name>
    <name type="common">Mycobacterium paratuberculosis</name>
    <dbReference type="NCBI Taxonomy" id="262316"/>
    <lineage>
        <taxon>Bacteria</taxon>
        <taxon>Bacillati</taxon>
        <taxon>Actinomycetota</taxon>
        <taxon>Actinomycetes</taxon>
        <taxon>Mycobacteriales</taxon>
        <taxon>Mycobacteriaceae</taxon>
        <taxon>Mycobacterium</taxon>
        <taxon>Mycobacterium avium complex (MAC)</taxon>
    </lineage>
</organism>
<keyword id="KW-0028">Amino-acid biosynthesis</keyword>
<keyword id="KW-0963">Cytoplasm</keyword>
<keyword id="KW-0315">Glutamine amidotransferase</keyword>
<keyword id="KW-0368">Histidine biosynthesis</keyword>
<keyword id="KW-0378">Hydrolase</keyword>
<keyword id="KW-0456">Lyase</keyword>
<keyword id="KW-1185">Reference proteome</keyword>